<feature type="initiator methionine" description="Removed" evidence="1">
    <location>
        <position position="1"/>
    </location>
</feature>
<feature type="chain" id="PRO_0000340077" description="Photosystem II protein D1" evidence="1">
    <location>
        <begin position="2"/>
        <end position="344"/>
    </location>
</feature>
<feature type="propeptide" id="PRO_0000340078" evidence="1">
    <location>
        <begin position="345"/>
        <end position="352"/>
    </location>
</feature>
<feature type="transmembrane region" description="Helical" evidence="1">
    <location>
        <begin position="29"/>
        <end position="46"/>
    </location>
</feature>
<feature type="transmembrane region" description="Helical" evidence="1">
    <location>
        <begin position="118"/>
        <end position="133"/>
    </location>
</feature>
<feature type="transmembrane region" description="Helical" evidence="1">
    <location>
        <begin position="142"/>
        <end position="156"/>
    </location>
</feature>
<feature type="transmembrane region" description="Helical" evidence="1">
    <location>
        <begin position="197"/>
        <end position="218"/>
    </location>
</feature>
<feature type="transmembrane region" description="Helical" evidence="1">
    <location>
        <begin position="274"/>
        <end position="288"/>
    </location>
</feature>
<feature type="binding site" description="axial binding residue" evidence="1">
    <location>
        <position position="118"/>
    </location>
    <ligand>
        <name>chlorophyll a</name>
        <dbReference type="ChEBI" id="CHEBI:58416"/>
        <label>ChlzD1</label>
    </ligand>
    <ligandPart>
        <name>Mg</name>
        <dbReference type="ChEBI" id="CHEBI:25107"/>
    </ligandPart>
</feature>
<feature type="binding site" evidence="1">
    <location>
        <position position="126"/>
    </location>
    <ligand>
        <name>pheophytin a</name>
        <dbReference type="ChEBI" id="CHEBI:136840"/>
        <label>D1</label>
    </ligand>
</feature>
<feature type="binding site" evidence="1">
    <location>
        <position position="170"/>
    </location>
    <ligand>
        <name>[CaMn4O5] cluster</name>
        <dbReference type="ChEBI" id="CHEBI:189552"/>
    </ligand>
</feature>
<feature type="binding site" evidence="1">
    <location>
        <position position="189"/>
    </location>
    <ligand>
        <name>[CaMn4O5] cluster</name>
        <dbReference type="ChEBI" id="CHEBI:189552"/>
    </ligand>
</feature>
<feature type="binding site" description="axial binding residue" evidence="1">
    <location>
        <position position="198"/>
    </location>
    <ligand>
        <name>chlorophyll a</name>
        <dbReference type="ChEBI" id="CHEBI:58416"/>
        <label>PD1</label>
    </ligand>
    <ligandPart>
        <name>Mg</name>
        <dbReference type="ChEBI" id="CHEBI:25107"/>
    </ligandPart>
</feature>
<feature type="binding site" evidence="1">
    <location>
        <position position="215"/>
    </location>
    <ligand>
        <name>a quinone</name>
        <dbReference type="ChEBI" id="CHEBI:132124"/>
        <label>B</label>
    </ligand>
</feature>
<feature type="binding site" evidence="1">
    <location>
        <position position="215"/>
    </location>
    <ligand>
        <name>Fe cation</name>
        <dbReference type="ChEBI" id="CHEBI:24875"/>
        <note>ligand shared with heterodimeric partner</note>
    </ligand>
</feature>
<feature type="binding site" evidence="1">
    <location>
        <begin position="264"/>
        <end position="265"/>
    </location>
    <ligand>
        <name>a quinone</name>
        <dbReference type="ChEBI" id="CHEBI:132124"/>
        <label>B</label>
    </ligand>
</feature>
<feature type="binding site" evidence="1">
    <location>
        <position position="272"/>
    </location>
    <ligand>
        <name>Fe cation</name>
        <dbReference type="ChEBI" id="CHEBI:24875"/>
        <note>ligand shared with heterodimeric partner</note>
    </ligand>
</feature>
<feature type="binding site" evidence="1">
    <location>
        <position position="332"/>
    </location>
    <ligand>
        <name>[CaMn4O5] cluster</name>
        <dbReference type="ChEBI" id="CHEBI:189552"/>
    </ligand>
</feature>
<feature type="binding site" evidence="1">
    <location>
        <position position="333"/>
    </location>
    <ligand>
        <name>[CaMn4O5] cluster</name>
        <dbReference type="ChEBI" id="CHEBI:189552"/>
    </ligand>
</feature>
<feature type="binding site" evidence="1">
    <location>
        <position position="342"/>
    </location>
    <ligand>
        <name>[CaMn4O5] cluster</name>
        <dbReference type="ChEBI" id="CHEBI:189552"/>
    </ligand>
</feature>
<feature type="binding site" evidence="1">
    <location>
        <position position="344"/>
    </location>
    <ligand>
        <name>[CaMn4O5] cluster</name>
        <dbReference type="ChEBI" id="CHEBI:189552"/>
    </ligand>
</feature>
<feature type="site" description="Tyrosine radical intermediate" evidence="1">
    <location>
        <position position="161"/>
    </location>
</feature>
<feature type="site" description="Stabilizes free radical intermediate" evidence="1">
    <location>
        <position position="190"/>
    </location>
</feature>
<feature type="site" description="Cleavage; by CTPA" evidence="1">
    <location>
        <begin position="344"/>
        <end position="345"/>
    </location>
</feature>
<feature type="modified residue" description="N-acetylthreonine" evidence="1">
    <location>
        <position position="2"/>
    </location>
</feature>
<feature type="modified residue" description="Phosphothreonine" evidence="1">
    <location>
        <position position="2"/>
    </location>
</feature>
<comment type="function">
    <text evidence="1">Photosystem II (PSII) is a light-driven water:plastoquinone oxidoreductase that uses light energy to abstract electrons from H(2)O, generating O(2) and a proton gradient subsequently used for ATP formation. It consists of a core antenna complex that captures photons, and an electron transfer chain that converts photonic excitation into a charge separation. The D1/D2 (PsbA/PsbD) reaction center heterodimer binds P680, the primary electron donor of PSII as well as several subsequent electron acceptors.</text>
</comment>
<comment type="catalytic activity">
    <reaction evidence="1">
        <text>2 a plastoquinone + 4 hnu + 2 H2O = 2 a plastoquinol + O2</text>
        <dbReference type="Rhea" id="RHEA:36359"/>
        <dbReference type="Rhea" id="RHEA-COMP:9561"/>
        <dbReference type="Rhea" id="RHEA-COMP:9562"/>
        <dbReference type="ChEBI" id="CHEBI:15377"/>
        <dbReference type="ChEBI" id="CHEBI:15379"/>
        <dbReference type="ChEBI" id="CHEBI:17757"/>
        <dbReference type="ChEBI" id="CHEBI:30212"/>
        <dbReference type="ChEBI" id="CHEBI:62192"/>
        <dbReference type="EC" id="1.10.3.9"/>
    </reaction>
</comment>
<comment type="cofactor">
    <text evidence="1">The D1/D2 heterodimer binds P680, chlorophylls that are the primary electron donor of PSII, and subsequent electron acceptors. It shares a non-heme iron and each subunit binds pheophytin, quinone, additional chlorophylls, carotenoids and lipids. D1 provides most of the ligands for the Mn4-Ca-O5 cluster of the oxygen-evolving complex (OEC). There is also a Cl(-1) ion associated with D1 and D2, which is required for oxygen evolution. The PSII complex binds additional chlorophylls, carotenoids and specific lipids.</text>
</comment>
<comment type="subunit">
    <text evidence="1">PSII is composed of 1 copy each of membrane proteins PsbA, PsbB, PsbC, PsbD, PsbE, PsbF, PsbH, PsbI, PsbJ, PsbK, PsbL, PsbM, PsbT, PsbX, PsbY, PsbZ, Psb30/Ycf12, at least 3 peripheral proteins of the oxygen-evolving complex and a large number of cofactors. It forms dimeric complexes.</text>
</comment>
<comment type="subcellular location">
    <subcellularLocation>
        <location evidence="1">Plastid</location>
        <location evidence="1">Chloroplast thylakoid membrane</location>
        <topology evidence="1">Multi-pass membrane protein</topology>
    </subcellularLocation>
</comment>
<comment type="PTM">
    <text evidence="1">Tyr-161 forms a radical intermediate that is referred to as redox-active TyrZ, YZ or Y-Z.</text>
</comment>
<comment type="PTM">
    <text evidence="1">C-terminally processed by CTPA; processing is essential to allow assembly of the oxygen-evolving complex and thus photosynthetic growth.</text>
</comment>
<comment type="miscellaneous">
    <text evidence="1">2 of the reaction center chlorophylls (ChlD1 and ChlD2) are entirely coordinated by water.</text>
</comment>
<comment type="miscellaneous">
    <text evidence="1">Herbicides such as atrazine, BNT, diuron or ioxynil bind in the Q(B) binding site and block subsequent electron transfer.</text>
</comment>
<comment type="similarity">
    <text evidence="1">Belongs to the reaction center PufL/M/PsbA/D family.</text>
</comment>
<geneLocation type="chloroplast"/>
<protein>
    <recommendedName>
        <fullName evidence="1">Photosystem II protein D1</fullName>
        <shortName evidence="1">PSII D1 protein</shortName>
        <ecNumber evidence="1">1.10.3.9</ecNumber>
    </recommendedName>
    <alternativeName>
        <fullName evidence="1">Photosystem II Q(B) protein</fullName>
    </alternativeName>
</protein>
<reference key="1">
    <citation type="journal article" date="2005" name="BMC Biol.">
        <title>The complete chloroplast DNA sequences of the charophycean green algae Staurastrum and Zygnema reveal that the chloroplast genome underwent extensive changes during the evolution of the Zygnematales.</title>
        <authorList>
            <person name="Turmel M."/>
            <person name="Otis C."/>
            <person name="Lemieux C."/>
        </authorList>
    </citation>
    <scope>NUCLEOTIDE SEQUENCE [LARGE SCALE GENOMIC DNA]</scope>
</reference>
<accession>Q32RM3</accession>
<organism>
    <name type="scientific">Zygnema circumcarinatum</name>
    <name type="common">Green alga</name>
    <dbReference type="NCBI Taxonomy" id="35869"/>
    <lineage>
        <taxon>Eukaryota</taxon>
        <taxon>Viridiplantae</taxon>
        <taxon>Streptophyta</taxon>
        <taxon>Zygnematophyceae</taxon>
        <taxon>Zygnematophycidae</taxon>
        <taxon>Zygnematales</taxon>
        <taxon>Zygnemataceae</taxon>
        <taxon>Zygnema</taxon>
    </lineage>
</organism>
<proteinExistence type="inferred from homology"/>
<gene>
    <name evidence="1" type="primary">psbA</name>
</gene>
<name>PSBA_ZYGCR</name>
<dbReference type="EC" id="1.10.3.9" evidence="1"/>
<dbReference type="EMBL" id="AY958086">
    <property type="protein sequence ID" value="AAX45836.1"/>
    <property type="molecule type" value="Genomic_DNA"/>
</dbReference>
<dbReference type="RefSeq" id="YP_636503.1">
    <property type="nucleotide sequence ID" value="NC_008117.1"/>
</dbReference>
<dbReference type="SMR" id="Q32RM3"/>
<dbReference type="GeneID" id="4108156"/>
<dbReference type="GO" id="GO:0009535">
    <property type="term" value="C:chloroplast thylakoid membrane"/>
    <property type="evidence" value="ECO:0007669"/>
    <property type="project" value="UniProtKB-SubCell"/>
</dbReference>
<dbReference type="GO" id="GO:0009523">
    <property type="term" value="C:photosystem II"/>
    <property type="evidence" value="ECO:0007669"/>
    <property type="project" value="UniProtKB-KW"/>
</dbReference>
<dbReference type="GO" id="GO:0016168">
    <property type="term" value="F:chlorophyll binding"/>
    <property type="evidence" value="ECO:0007669"/>
    <property type="project" value="UniProtKB-UniRule"/>
</dbReference>
<dbReference type="GO" id="GO:0045156">
    <property type="term" value="F:electron transporter, transferring electrons within the cyclic electron transport pathway of photosynthesis activity"/>
    <property type="evidence" value="ECO:0007669"/>
    <property type="project" value="InterPro"/>
</dbReference>
<dbReference type="GO" id="GO:0005506">
    <property type="term" value="F:iron ion binding"/>
    <property type="evidence" value="ECO:0007669"/>
    <property type="project" value="UniProtKB-UniRule"/>
</dbReference>
<dbReference type="GO" id="GO:0016682">
    <property type="term" value="F:oxidoreductase activity, acting on diphenols and related substances as donors, oxygen as acceptor"/>
    <property type="evidence" value="ECO:0007669"/>
    <property type="project" value="UniProtKB-UniRule"/>
</dbReference>
<dbReference type="GO" id="GO:0010242">
    <property type="term" value="F:oxygen evolving activity"/>
    <property type="evidence" value="ECO:0007669"/>
    <property type="project" value="UniProtKB-EC"/>
</dbReference>
<dbReference type="GO" id="GO:0009772">
    <property type="term" value="P:photosynthetic electron transport in photosystem II"/>
    <property type="evidence" value="ECO:0007669"/>
    <property type="project" value="InterPro"/>
</dbReference>
<dbReference type="GO" id="GO:0009635">
    <property type="term" value="P:response to herbicide"/>
    <property type="evidence" value="ECO:0007669"/>
    <property type="project" value="UniProtKB-KW"/>
</dbReference>
<dbReference type="CDD" id="cd09289">
    <property type="entry name" value="Photosystem-II_D1"/>
    <property type="match status" value="1"/>
</dbReference>
<dbReference type="FunFam" id="1.20.85.10:FF:000002">
    <property type="entry name" value="Photosystem II protein D1"/>
    <property type="match status" value="1"/>
</dbReference>
<dbReference type="Gene3D" id="1.20.85.10">
    <property type="entry name" value="Photosystem II protein D1-like"/>
    <property type="match status" value="1"/>
</dbReference>
<dbReference type="HAMAP" id="MF_01379">
    <property type="entry name" value="PSII_PsbA_D1"/>
    <property type="match status" value="1"/>
</dbReference>
<dbReference type="InterPro" id="IPR055266">
    <property type="entry name" value="D1/D2"/>
</dbReference>
<dbReference type="InterPro" id="IPR036854">
    <property type="entry name" value="Photo_II_D1/D2_sf"/>
</dbReference>
<dbReference type="InterPro" id="IPR000484">
    <property type="entry name" value="Photo_RC_L/M"/>
</dbReference>
<dbReference type="InterPro" id="IPR055265">
    <property type="entry name" value="Photo_RC_L/M_CS"/>
</dbReference>
<dbReference type="InterPro" id="IPR005867">
    <property type="entry name" value="PSII_D1"/>
</dbReference>
<dbReference type="NCBIfam" id="TIGR01151">
    <property type="entry name" value="psbA"/>
    <property type="match status" value="1"/>
</dbReference>
<dbReference type="PANTHER" id="PTHR33149:SF12">
    <property type="entry name" value="PHOTOSYSTEM II D2 PROTEIN"/>
    <property type="match status" value="1"/>
</dbReference>
<dbReference type="PANTHER" id="PTHR33149">
    <property type="entry name" value="PHOTOSYSTEM II PROTEIN D1"/>
    <property type="match status" value="1"/>
</dbReference>
<dbReference type="Pfam" id="PF00124">
    <property type="entry name" value="Photo_RC"/>
    <property type="match status" value="1"/>
</dbReference>
<dbReference type="PRINTS" id="PR00256">
    <property type="entry name" value="REACTNCENTRE"/>
</dbReference>
<dbReference type="SUPFAM" id="SSF81483">
    <property type="entry name" value="Bacterial photosystem II reaction centre, L and M subunits"/>
    <property type="match status" value="1"/>
</dbReference>
<dbReference type="PROSITE" id="PS00244">
    <property type="entry name" value="REACTION_CENTER"/>
    <property type="match status" value="1"/>
</dbReference>
<keyword id="KW-0007">Acetylation</keyword>
<keyword id="KW-0106">Calcium</keyword>
<keyword id="KW-0148">Chlorophyll</keyword>
<keyword id="KW-0150">Chloroplast</keyword>
<keyword id="KW-0157">Chromophore</keyword>
<keyword id="KW-0249">Electron transport</keyword>
<keyword id="KW-0359">Herbicide resistance</keyword>
<keyword id="KW-0408">Iron</keyword>
<keyword id="KW-0460">Magnesium</keyword>
<keyword id="KW-0464">Manganese</keyword>
<keyword id="KW-0472">Membrane</keyword>
<keyword id="KW-0479">Metal-binding</keyword>
<keyword id="KW-0560">Oxidoreductase</keyword>
<keyword id="KW-0597">Phosphoprotein</keyword>
<keyword id="KW-0602">Photosynthesis</keyword>
<keyword id="KW-0604">Photosystem II</keyword>
<keyword id="KW-0934">Plastid</keyword>
<keyword id="KW-0793">Thylakoid</keyword>
<keyword id="KW-0812">Transmembrane</keyword>
<keyword id="KW-1133">Transmembrane helix</keyword>
<keyword id="KW-0813">Transport</keyword>
<sequence>MTATLERRESASLWGRFCDWVTSTENRLYIGWFGVIMIPTLLTATSVFIIAFIAAPPVDIDGIREPVAGSLLFGNNIISGAIVPTSAAIGLHFYPIWEAASVDEWLYNGGPYELIVLHFLLGVCCYMGREWELSFRLGMRPWIAVAYSAPVAAATAVFLIYPIGQGSFSDGMPLGISGTFNFMIVFQAEHNILMHPFHMLGVAGVFGGSLFSAMHGSLVTSSLIRETTENESANAGYKFGQEEETYNIVAAHGYFGRLIFQYASFNNSRSLHFFLAAWPVVGIWFTALGVSTMAFNLNGFNFNQSVVDSQGRVINTWADIINRANLGMEVMHERNAHNFPLDLASVEAPVVG</sequence>
<evidence type="ECO:0000255" key="1">
    <source>
        <dbReference type="HAMAP-Rule" id="MF_01379"/>
    </source>
</evidence>